<feature type="peptide" id="PRO_0000378834" description="Periviscerokinin-3" evidence="2">
    <location>
        <begin position="1"/>
        <end position="11"/>
    </location>
</feature>
<feature type="modified residue" description="Valine amide" evidence="2">
    <location>
        <position position="11"/>
    </location>
</feature>
<keyword id="KW-0027">Amidation</keyword>
<keyword id="KW-0903">Direct protein sequencing</keyword>
<keyword id="KW-0527">Neuropeptide</keyword>
<keyword id="KW-0964">Secreted</keyword>
<dbReference type="GO" id="GO:0005576">
    <property type="term" value="C:extracellular region"/>
    <property type="evidence" value="ECO:0007669"/>
    <property type="project" value="UniProtKB-SubCell"/>
</dbReference>
<dbReference type="GO" id="GO:0007218">
    <property type="term" value="P:neuropeptide signaling pathway"/>
    <property type="evidence" value="ECO:0007669"/>
    <property type="project" value="UniProtKB-KW"/>
</dbReference>
<dbReference type="InterPro" id="IPR013231">
    <property type="entry name" value="Periviscerokinin"/>
</dbReference>
<dbReference type="Pfam" id="PF08259">
    <property type="entry name" value="Periviscerokin"/>
    <property type="match status" value="1"/>
</dbReference>
<organism>
    <name type="scientific">Gyna cf. cafforum (strain SR-2005)</name>
    <name type="common">Cockroach</name>
    <dbReference type="NCBI Taxonomy" id="348763"/>
    <lineage>
        <taxon>Eukaryota</taxon>
        <taxon>Metazoa</taxon>
        <taxon>Ecdysozoa</taxon>
        <taxon>Arthropoda</taxon>
        <taxon>Hexapoda</taxon>
        <taxon>Insecta</taxon>
        <taxon>Pterygota</taxon>
        <taxon>Neoptera</taxon>
        <taxon>Polyneoptera</taxon>
        <taxon>Dictyoptera</taxon>
        <taxon>Blattodea</taxon>
        <taxon>Blaberoidea</taxon>
        <taxon>Blaberidae</taxon>
        <taxon>Gyninae</taxon>
        <taxon>Gyna</taxon>
    </lineage>
</organism>
<protein>
    <recommendedName>
        <fullName evidence="3">Periviscerokinin-3</fullName>
        <shortName evidence="3">GynCa-PVK-3</shortName>
    </recommendedName>
</protein>
<evidence type="ECO:0000255" key="1"/>
<evidence type="ECO:0000269" key="2">
    <source>
    </source>
</evidence>
<evidence type="ECO:0000303" key="3">
    <source>
    </source>
</evidence>
<evidence type="ECO:0000305" key="4"/>
<sequence length="11" mass="1147">GSSGMIPFPRV</sequence>
<name>PVK3_GYNCS</name>
<reference evidence="4" key="1">
    <citation type="journal article" date="2009" name="BMC Evol. Biol.">
        <title>A proteomic approach for studying insect phylogeny: CAPA peptides of ancient insect taxa (Dictyoptera, Blattoptera) as a test case.</title>
        <authorList>
            <person name="Roth S."/>
            <person name="Fromm B."/>
            <person name="Gaede G."/>
            <person name="Predel R."/>
        </authorList>
    </citation>
    <scope>PROTEIN SEQUENCE</scope>
    <scope>AMIDATION AT VAL-11</scope>
    <source>
        <tissue evidence="2">Abdominal perisympathetic organs</tissue>
    </source>
</reference>
<comment type="function">
    <text evidence="4">Mediates visceral muscle contractile activity (myotropic activity).</text>
</comment>
<comment type="subcellular location">
    <subcellularLocation>
        <location evidence="4">Secreted</location>
    </subcellularLocation>
</comment>
<comment type="similarity">
    <text evidence="1">Belongs to the periviscerokinin family.</text>
</comment>
<proteinExistence type="evidence at protein level"/>
<accession>P85645</accession>